<protein>
    <recommendedName>
        <fullName evidence="1">Small ribosomal subunit protein uS9</fullName>
    </recommendedName>
    <alternativeName>
        <fullName evidence="3">30S ribosomal protein S9</fullName>
    </alternativeName>
</protein>
<keyword id="KW-0687">Ribonucleoprotein</keyword>
<keyword id="KW-0689">Ribosomal protein</keyword>
<dbReference type="EMBL" id="CP000609">
    <property type="protein sequence ID" value="ABO34584.1"/>
    <property type="molecule type" value="Genomic_DNA"/>
</dbReference>
<dbReference type="RefSeq" id="WP_011868040.1">
    <property type="nucleotide sequence ID" value="NC_009135.1"/>
</dbReference>
<dbReference type="SMR" id="A4FWK9"/>
<dbReference type="STRING" id="402880.MmarC5_0268"/>
<dbReference type="GeneID" id="4928409"/>
<dbReference type="KEGG" id="mmq:MmarC5_0268"/>
<dbReference type="eggNOG" id="arCOG04243">
    <property type="taxonomic scope" value="Archaea"/>
</dbReference>
<dbReference type="HOGENOM" id="CLU_046483_4_0_2"/>
<dbReference type="OrthoDB" id="52677at2157"/>
<dbReference type="Proteomes" id="UP000000253">
    <property type="component" value="Chromosome"/>
</dbReference>
<dbReference type="GO" id="GO:0022627">
    <property type="term" value="C:cytosolic small ribosomal subunit"/>
    <property type="evidence" value="ECO:0007669"/>
    <property type="project" value="TreeGrafter"/>
</dbReference>
<dbReference type="GO" id="GO:0003723">
    <property type="term" value="F:RNA binding"/>
    <property type="evidence" value="ECO:0007669"/>
    <property type="project" value="TreeGrafter"/>
</dbReference>
<dbReference type="GO" id="GO:0003735">
    <property type="term" value="F:structural constituent of ribosome"/>
    <property type="evidence" value="ECO:0007669"/>
    <property type="project" value="InterPro"/>
</dbReference>
<dbReference type="GO" id="GO:0000462">
    <property type="term" value="P:maturation of SSU-rRNA from tricistronic rRNA transcript (SSU-rRNA, 5.8S rRNA, LSU-rRNA)"/>
    <property type="evidence" value="ECO:0007669"/>
    <property type="project" value="TreeGrafter"/>
</dbReference>
<dbReference type="GO" id="GO:0006412">
    <property type="term" value="P:translation"/>
    <property type="evidence" value="ECO:0007669"/>
    <property type="project" value="UniProtKB-UniRule"/>
</dbReference>
<dbReference type="Gene3D" id="3.30.230.10">
    <property type="match status" value="1"/>
</dbReference>
<dbReference type="HAMAP" id="MF_00532_A">
    <property type="entry name" value="Ribosomal_uS9_A"/>
    <property type="match status" value="1"/>
</dbReference>
<dbReference type="InterPro" id="IPR020568">
    <property type="entry name" value="Ribosomal_Su5_D2-typ_SF"/>
</dbReference>
<dbReference type="InterPro" id="IPR000754">
    <property type="entry name" value="Ribosomal_uS9"/>
</dbReference>
<dbReference type="InterPro" id="IPR019958">
    <property type="entry name" value="Ribosomal_uS9_archaeal"/>
</dbReference>
<dbReference type="InterPro" id="IPR020574">
    <property type="entry name" value="Ribosomal_uS9_CS"/>
</dbReference>
<dbReference type="InterPro" id="IPR014721">
    <property type="entry name" value="Ribsml_uS5_D2-typ_fold_subgr"/>
</dbReference>
<dbReference type="NCBIfam" id="NF001749">
    <property type="entry name" value="PRK00474.1"/>
    <property type="match status" value="1"/>
</dbReference>
<dbReference type="NCBIfam" id="TIGR03627">
    <property type="entry name" value="uS9_arch"/>
    <property type="match status" value="1"/>
</dbReference>
<dbReference type="PANTHER" id="PTHR21569:SF16">
    <property type="entry name" value="RIBOSOMAL PROTEIN S16"/>
    <property type="match status" value="1"/>
</dbReference>
<dbReference type="PANTHER" id="PTHR21569">
    <property type="entry name" value="RIBOSOMAL PROTEIN S9"/>
    <property type="match status" value="1"/>
</dbReference>
<dbReference type="Pfam" id="PF00380">
    <property type="entry name" value="Ribosomal_S9"/>
    <property type="match status" value="1"/>
</dbReference>
<dbReference type="SUPFAM" id="SSF54211">
    <property type="entry name" value="Ribosomal protein S5 domain 2-like"/>
    <property type="match status" value="1"/>
</dbReference>
<dbReference type="PROSITE" id="PS00360">
    <property type="entry name" value="RIBOSOMAL_S9"/>
    <property type="match status" value="1"/>
</dbReference>
<comment type="similarity">
    <text evidence="1">Belongs to the universal ribosomal protein uS9 family.</text>
</comment>
<sequence length="134" mass="14925">MKVVHTVGKRRTAIARATAKEGSGKIRINKKPLELMEPKYIKMKLMEPVILAGEALSDIDVDIDVKGGGIVSQMDATRTALGKAIVEFTGKMELKEKFLSYDRTLLVSDARRTEPHKPSKSSKGPRAKRQKSYR</sequence>
<feature type="chain" id="PRO_1000061006" description="Small ribosomal subunit protein uS9">
    <location>
        <begin position="1"/>
        <end position="134"/>
    </location>
</feature>
<feature type="region of interest" description="Disordered" evidence="2">
    <location>
        <begin position="109"/>
        <end position="134"/>
    </location>
</feature>
<feature type="compositionally biased region" description="Basic residues" evidence="2">
    <location>
        <begin position="118"/>
        <end position="134"/>
    </location>
</feature>
<accession>A4FWK9</accession>
<name>RS9_METM5</name>
<evidence type="ECO:0000255" key="1">
    <source>
        <dbReference type="HAMAP-Rule" id="MF_00532"/>
    </source>
</evidence>
<evidence type="ECO:0000256" key="2">
    <source>
        <dbReference type="SAM" id="MobiDB-lite"/>
    </source>
</evidence>
<evidence type="ECO:0000305" key="3"/>
<organism>
    <name type="scientific">Methanococcus maripaludis (strain C5 / ATCC BAA-1333)</name>
    <dbReference type="NCBI Taxonomy" id="402880"/>
    <lineage>
        <taxon>Archaea</taxon>
        <taxon>Methanobacteriati</taxon>
        <taxon>Methanobacteriota</taxon>
        <taxon>Methanomada group</taxon>
        <taxon>Methanococci</taxon>
        <taxon>Methanococcales</taxon>
        <taxon>Methanococcaceae</taxon>
        <taxon>Methanococcus</taxon>
    </lineage>
</organism>
<proteinExistence type="inferred from homology"/>
<reference key="1">
    <citation type="submission" date="2007-03" db="EMBL/GenBank/DDBJ databases">
        <title>Complete sequence of chromosome of Methanococcus maripaludis C5.</title>
        <authorList>
            <consortium name="US DOE Joint Genome Institute"/>
            <person name="Copeland A."/>
            <person name="Lucas S."/>
            <person name="Lapidus A."/>
            <person name="Barry K."/>
            <person name="Glavina del Rio T."/>
            <person name="Dalin E."/>
            <person name="Tice H."/>
            <person name="Pitluck S."/>
            <person name="Chertkov O."/>
            <person name="Brettin T."/>
            <person name="Bruce D."/>
            <person name="Han C."/>
            <person name="Detter J.C."/>
            <person name="Schmutz J."/>
            <person name="Larimer F."/>
            <person name="Land M."/>
            <person name="Hauser L."/>
            <person name="Kyrpides N."/>
            <person name="Mikhailova N."/>
            <person name="Sieprawska-Lupa M."/>
            <person name="Whitman W.B."/>
            <person name="Richardson P."/>
        </authorList>
    </citation>
    <scope>NUCLEOTIDE SEQUENCE [LARGE SCALE GENOMIC DNA]</scope>
    <source>
        <strain>C5 / ATCC BAA-1333</strain>
    </source>
</reference>
<gene>
    <name evidence="1" type="primary">rps9</name>
    <name type="ordered locus">MmarC5_0268</name>
</gene>